<proteinExistence type="inferred from homology"/>
<dbReference type="EC" id="2.-.-.-"/>
<dbReference type="EMBL" id="CR382133">
    <property type="protein sequence ID" value="CAG84467.2"/>
    <property type="molecule type" value="Genomic_DNA"/>
</dbReference>
<dbReference type="RefSeq" id="XP_456512.2">
    <property type="nucleotide sequence ID" value="XM_456512.1"/>
</dbReference>
<dbReference type="SMR" id="Q6BZ57"/>
<dbReference type="FunCoup" id="Q6BZ57">
    <property type="interactions" value="495"/>
</dbReference>
<dbReference type="STRING" id="284592.Q6BZ57"/>
<dbReference type="GlyCosmos" id="Q6BZ57">
    <property type="glycosylation" value="3 sites, No reported glycans"/>
</dbReference>
<dbReference type="GeneID" id="2899847"/>
<dbReference type="KEGG" id="dha:DEHA2A04378g"/>
<dbReference type="VEuPathDB" id="FungiDB:DEHA2A04378g"/>
<dbReference type="eggNOG" id="KOG2125">
    <property type="taxonomic scope" value="Eukaryota"/>
</dbReference>
<dbReference type="HOGENOM" id="CLU_004770_0_0_1"/>
<dbReference type="InParanoid" id="Q6BZ57"/>
<dbReference type="OMA" id="SWNQTGQ"/>
<dbReference type="OrthoDB" id="272139at2759"/>
<dbReference type="UniPathway" id="UPA00196"/>
<dbReference type="Proteomes" id="UP000000599">
    <property type="component" value="Chromosome A"/>
</dbReference>
<dbReference type="GO" id="GO:0005789">
    <property type="term" value="C:endoplasmic reticulum membrane"/>
    <property type="evidence" value="ECO:0007669"/>
    <property type="project" value="UniProtKB-SubCell"/>
</dbReference>
<dbReference type="GO" id="GO:0005886">
    <property type="term" value="C:plasma membrane"/>
    <property type="evidence" value="ECO:0007669"/>
    <property type="project" value="EnsemblFungi"/>
</dbReference>
<dbReference type="GO" id="GO:0051267">
    <property type="term" value="F:CP2 mannose-ethanolamine phosphotransferase activity"/>
    <property type="evidence" value="ECO:0007669"/>
    <property type="project" value="EnsemblFungi"/>
</dbReference>
<dbReference type="GO" id="GO:0006506">
    <property type="term" value="P:GPI anchor biosynthetic process"/>
    <property type="evidence" value="ECO:0007669"/>
    <property type="project" value="UniProtKB-UniPathway"/>
</dbReference>
<dbReference type="CDD" id="cd16024">
    <property type="entry name" value="GPI_EPT_2"/>
    <property type="match status" value="1"/>
</dbReference>
<dbReference type="Gene3D" id="3.40.720.10">
    <property type="entry name" value="Alkaline Phosphatase, subunit A"/>
    <property type="match status" value="1"/>
</dbReference>
<dbReference type="InterPro" id="IPR017850">
    <property type="entry name" value="Alkaline_phosphatase_core_sf"/>
</dbReference>
<dbReference type="InterPro" id="IPR002591">
    <property type="entry name" value="Phosphodiest/P_Trfase"/>
</dbReference>
<dbReference type="InterPro" id="IPR037674">
    <property type="entry name" value="PIG-G_N"/>
</dbReference>
<dbReference type="InterPro" id="IPR039527">
    <property type="entry name" value="PIGG/GPI7"/>
</dbReference>
<dbReference type="InterPro" id="IPR045687">
    <property type="entry name" value="PIGG/GPI7_C"/>
</dbReference>
<dbReference type="PANTHER" id="PTHR23072:SF0">
    <property type="entry name" value="GPI ETHANOLAMINE PHOSPHATE TRANSFERASE 2"/>
    <property type="match status" value="1"/>
</dbReference>
<dbReference type="PANTHER" id="PTHR23072">
    <property type="entry name" value="PHOSPHATIDYLINOSITOL GLYCAN-RELATED"/>
    <property type="match status" value="1"/>
</dbReference>
<dbReference type="Pfam" id="PF01663">
    <property type="entry name" value="Phosphodiest"/>
    <property type="match status" value="1"/>
</dbReference>
<dbReference type="Pfam" id="PF19316">
    <property type="entry name" value="PIGO_PIGG"/>
    <property type="match status" value="1"/>
</dbReference>
<dbReference type="SUPFAM" id="SSF53649">
    <property type="entry name" value="Alkaline phosphatase-like"/>
    <property type="match status" value="1"/>
</dbReference>
<accession>Q6BZ57</accession>
<feature type="chain" id="PRO_0000246195" description="GPI ethanolamine phosphate transferase 2">
    <location>
        <begin position="1"/>
        <end position="877"/>
    </location>
</feature>
<feature type="transmembrane region" description="Helical" evidence="2">
    <location>
        <begin position="409"/>
        <end position="429"/>
    </location>
</feature>
<feature type="transmembrane region" description="Helical" evidence="2">
    <location>
        <begin position="443"/>
        <end position="463"/>
    </location>
</feature>
<feature type="transmembrane region" description="Helical" evidence="2">
    <location>
        <begin position="464"/>
        <end position="484"/>
    </location>
</feature>
<feature type="transmembrane region" description="Helical" evidence="2">
    <location>
        <begin position="528"/>
        <end position="548"/>
    </location>
</feature>
<feature type="transmembrane region" description="Helical" evidence="2">
    <location>
        <begin position="570"/>
        <end position="590"/>
    </location>
</feature>
<feature type="transmembrane region" description="Helical" evidence="2">
    <location>
        <begin position="634"/>
        <end position="654"/>
    </location>
</feature>
<feature type="transmembrane region" description="Helical" evidence="2">
    <location>
        <begin position="683"/>
        <end position="703"/>
    </location>
</feature>
<feature type="transmembrane region" description="Helical" evidence="2">
    <location>
        <begin position="716"/>
        <end position="736"/>
    </location>
</feature>
<feature type="transmembrane region" description="Helical" evidence="2">
    <location>
        <begin position="758"/>
        <end position="778"/>
    </location>
</feature>
<feature type="transmembrane region" description="Helical" evidence="2">
    <location>
        <begin position="817"/>
        <end position="837"/>
    </location>
</feature>
<feature type="transmembrane region" description="Helical" evidence="2">
    <location>
        <begin position="854"/>
        <end position="876"/>
    </location>
</feature>
<feature type="glycosylation site" description="N-linked (GlcNAc...) asparagine" evidence="2">
    <location>
        <position position="190"/>
    </location>
</feature>
<feature type="glycosylation site" description="N-linked (GlcNAc...) asparagine" evidence="2">
    <location>
        <position position="368"/>
    </location>
</feature>
<feature type="glycosylation site" description="N-linked (GlcNAc...) asparagine" evidence="2">
    <location>
        <position position="611"/>
    </location>
</feature>
<organism>
    <name type="scientific">Debaryomyces hansenii (strain ATCC 36239 / CBS 767 / BCRC 21394 / JCM 1990 / NBRC 0083 / IGC 2968)</name>
    <name type="common">Yeast</name>
    <name type="synonym">Torulaspora hansenii</name>
    <dbReference type="NCBI Taxonomy" id="284592"/>
    <lineage>
        <taxon>Eukaryota</taxon>
        <taxon>Fungi</taxon>
        <taxon>Dikarya</taxon>
        <taxon>Ascomycota</taxon>
        <taxon>Saccharomycotina</taxon>
        <taxon>Pichiomycetes</taxon>
        <taxon>Debaryomycetaceae</taxon>
        <taxon>Debaryomyces</taxon>
    </lineage>
</organism>
<reference key="1">
    <citation type="journal article" date="2004" name="Nature">
        <title>Genome evolution in yeasts.</title>
        <authorList>
            <person name="Dujon B."/>
            <person name="Sherman D."/>
            <person name="Fischer G."/>
            <person name="Durrens P."/>
            <person name="Casaregola S."/>
            <person name="Lafontaine I."/>
            <person name="de Montigny J."/>
            <person name="Marck C."/>
            <person name="Neuveglise C."/>
            <person name="Talla E."/>
            <person name="Goffard N."/>
            <person name="Frangeul L."/>
            <person name="Aigle M."/>
            <person name="Anthouard V."/>
            <person name="Babour A."/>
            <person name="Barbe V."/>
            <person name="Barnay S."/>
            <person name="Blanchin S."/>
            <person name="Beckerich J.-M."/>
            <person name="Beyne E."/>
            <person name="Bleykasten C."/>
            <person name="Boisrame A."/>
            <person name="Boyer J."/>
            <person name="Cattolico L."/>
            <person name="Confanioleri F."/>
            <person name="de Daruvar A."/>
            <person name="Despons L."/>
            <person name="Fabre E."/>
            <person name="Fairhead C."/>
            <person name="Ferry-Dumazet H."/>
            <person name="Groppi A."/>
            <person name="Hantraye F."/>
            <person name="Hennequin C."/>
            <person name="Jauniaux N."/>
            <person name="Joyet P."/>
            <person name="Kachouri R."/>
            <person name="Kerrest A."/>
            <person name="Koszul R."/>
            <person name="Lemaire M."/>
            <person name="Lesur I."/>
            <person name="Ma L."/>
            <person name="Muller H."/>
            <person name="Nicaud J.-M."/>
            <person name="Nikolski M."/>
            <person name="Oztas S."/>
            <person name="Ozier-Kalogeropoulos O."/>
            <person name="Pellenz S."/>
            <person name="Potier S."/>
            <person name="Richard G.-F."/>
            <person name="Straub M.-L."/>
            <person name="Suleau A."/>
            <person name="Swennen D."/>
            <person name="Tekaia F."/>
            <person name="Wesolowski-Louvel M."/>
            <person name="Westhof E."/>
            <person name="Wirth B."/>
            <person name="Zeniou-Meyer M."/>
            <person name="Zivanovic Y."/>
            <person name="Bolotin-Fukuhara M."/>
            <person name="Thierry A."/>
            <person name="Bouchier C."/>
            <person name="Caudron B."/>
            <person name="Scarpelli C."/>
            <person name="Gaillardin C."/>
            <person name="Weissenbach J."/>
            <person name="Wincker P."/>
            <person name="Souciet J.-L."/>
        </authorList>
    </citation>
    <scope>NUCLEOTIDE SEQUENCE [LARGE SCALE GENOMIC DNA]</scope>
    <source>
        <strain>ATCC 36239 / CBS 767 / BCRC 21394 / JCM 1990 / NBRC 0083 / IGC 2968</strain>
    </source>
</reference>
<name>GPI7_DEBHA</name>
<sequence>MGSSKWGVLFGLLILHVIGYSIFLKGFFPSKVVVPGFNEFHTGQSPFMEHNEAKFDKLILMVVDAMRSDFLYSDHSHMKFVHQLINENCALPFTSYSNPPTVTLPRLKGITTGGTPSFLDAILNIADDKDNSQSLLNQDSWLHQFQNNSKVFNFFGDDTWLKLFPPEKFFNQYEGTNSFFVNDFTDVDNNVTRHLNDDLFNSKWDALILHYLGLDHIGHKGGPNSIFMRGKQEEMDGIIEKLYKETIDSNTLLVVMGDHGMNEIGNHGGSSMGETNPGLLFASPKFKMLKKNLKSPLAYNNDYKYYNYINQIDLVPTLATLLNFPIPKNNLGIVIKDILGLWKPEAQKSILMENSEQFMNIYEAKHANDTDIINEWKKSQDSGSIDVHYDFLSKIQGLLTSAATEYKYVDIYIGLSILVAMAIVAFGLFNWYFLVQATINPKYNWYFIGISIVYSIHFHASSLIEEEYQIWWFFSIICLFALYFNNHLKSLKYFWLILVGLRIIRSWSITGQKFTTPYTFSAYLLQNVDLLWVLNIATYFLTAILIYSQGSLIHCVTLREYESLRENVKDFGSLVTFIVTFVTCSISFSFKLCQYFNDGKRVPDWLLAFLNWTCESYGITIDPKEKNQLHELNIHLSKILFYCIGVLIIVRIVLGKIRKLHYGLLTDLSNVLTLFLLHQSRPEIVPIFLIFSLVKFSAAKLLANNEIVLRKNIDQLMIIITLFSLCMQNLSFFSMGNTNSLATVDLSNSYNGFKSYDVFLVGVLTYCSNFAGPIFWSLASLQLIFENNVVCFDTKKSSKDLVNLKFLKYQILYVKSLAGFLFYSMAGLSLVASCFNLRFHLFIWSVFSPKLLFFASWTLLTNILIDTISSLSILALC</sequence>
<gene>
    <name type="primary">LAS21</name>
    <name type="synonym">GPI7</name>
    <name type="ordered locus">DEHA2A04378g</name>
</gene>
<comment type="function">
    <text evidence="1">Ethanolamine phosphate transferase involved in glycosylphosphatidylinositol-anchor biosynthesis. Transfers ethanolamine phosphate to the GPI second mannose (By similarity).</text>
</comment>
<comment type="pathway">
    <text>Glycolipid biosynthesis; glycosylphosphatidylinositol-anchor biosynthesis.</text>
</comment>
<comment type="subcellular location">
    <subcellularLocation>
        <location evidence="1">Endoplasmic reticulum membrane</location>
        <topology evidence="1">Multi-pass membrane protein</topology>
    </subcellularLocation>
</comment>
<comment type="similarity">
    <text evidence="3">Belongs to the PIGG/PIGN/PIGO family. PIGG subfamily.</text>
</comment>
<evidence type="ECO:0000250" key="1"/>
<evidence type="ECO:0000255" key="2"/>
<evidence type="ECO:0000305" key="3"/>
<keyword id="KW-0256">Endoplasmic reticulum</keyword>
<keyword id="KW-0325">Glycoprotein</keyword>
<keyword id="KW-0337">GPI-anchor biosynthesis</keyword>
<keyword id="KW-0472">Membrane</keyword>
<keyword id="KW-1185">Reference proteome</keyword>
<keyword id="KW-0808">Transferase</keyword>
<keyword id="KW-0812">Transmembrane</keyword>
<keyword id="KW-1133">Transmembrane helix</keyword>
<protein>
    <recommendedName>
        <fullName>GPI ethanolamine phosphate transferase 2</fullName>
        <ecNumber>2.-.-.-</ecNumber>
    </recommendedName>
    <alternativeName>
        <fullName>Glycosylphosphatidylinositol-anchor biosynthesis protein 7</fullName>
    </alternativeName>
</protein>